<organism>
    <name type="scientific">Trypanosoma brucei brucei</name>
    <dbReference type="NCBI Taxonomy" id="5702"/>
    <lineage>
        <taxon>Eukaryota</taxon>
        <taxon>Discoba</taxon>
        <taxon>Euglenozoa</taxon>
        <taxon>Kinetoplastea</taxon>
        <taxon>Metakinetoplastina</taxon>
        <taxon>Trypanosomatida</taxon>
        <taxon>Trypanosomatidae</taxon>
        <taxon>Trypanosoma</taxon>
    </lineage>
</organism>
<sequence length="1642" mass="181585">MGLPFLCHTRVCLFSNKIPFVLCGSRFAPATLHAHHTAAGGGETLNFPELSSPSTSKEPSVGSDSPQKKNKKQAFDALARWCGGHQQLLMRIQQSAEDTSAGVVFETPLTEVDSAAIRWLQGSTEQLTCGQSLLVCSFVCEVLYCQLNSASGGIGVEEAQRLQIHALTNRIAALLQRADESNKLESQPLSVLMSCAYVVQRLKYVDNPLFGETQRSLVKVPPSIMFALLHKLRGDGLGKLFQLDERTATDVCLSFLFIATEEHRQAFFSSGDAALVSNVLRRLVRYTASKTRRMRIQKEGDIIDLLTVDSPSDGGARQTPVCTSGTGFTSPSMRECAMIMQNVSFSSPSNRLELLLYLLCVRRNLAQCSLKDIELVPTVLSTVANIRSAEACSIRKKIISQLWLPENNPTLVAQLLVHSGESIPRYVTYLQGVPASKLSPRDAAQVILCAGTYLSYESLQLYIMAALRDIMPSSSLVTLGAETTSASVPATASVPTRVPACDSLETVLSVLLMRVEEKGGSLSEVEKDACMEYIRRLNELIDWCASAPTSSPKPALQRLTLLTKLFNRGLVVHAPETVVELAVQSLQLDPGNTMMNTLKCVSEALPLVSDDKKRSIIIEKMISYSGTRTTSSVIRFLLLLAPLVDADSPHSCELVEQLLKFHTLNPHKLRQASVEGVAKGIDVYTLLLINGIDFLLASGDWRSSPSQLQNVITTWVRDYTLYVMDPARKQKIDDGAAAHVAPATKGEKTDVVQHQQPSRLNEGGELPTLSGPNDEELEQVFTCLLRAGVKLPHAFSSELLSRIRRLQAKRNPADGTDQQVVFPLPAHFVFCCKLDVPVEVSVTPEMMKYHIDACDYRIIHCVITAFFSAAGTFKHNINDLLLCNMRLASRSFELFIQRLGEEASRSFRPATVSSVVANTLRFVVNHITKQERCQRVLRKLNEKGGIEAGEEELEGDRSLIAEHTRLGELLTRMIAYLSGAHVKNVGLSVLDRLSLLSPACGEYLMMRLSTQLSEFTQVELLYLVQKYPKSQDLVAELLGKSDLVSSMDFGDYMRVMRNLPMPINALVIGAHLPGLNFQWCTRILSSLSVRHESVPLHLLASVLRRLNDVTESATLTDRNIAFVVLQKYLQFDQTSGDGGDLEERQRLIKCSCDKLLVLSRINSLDTLKEFLVEFPEALSGVICESLSKHVVQHIVGGLLKDLDGLLTLCRLLHRHKLLTSDVKVAIVDGFFMKTLQSEVEGRANIEGESSQGLQPLNSVRGASLKTTHPVSNVLALALLLSDGPLHFPGASNSSSTICGDNERCAVSSMFQVVKESYTSPRDRLLIANTLVGQKGPNALTVVAKEICTELIENCESVTSNDFSRLLQCISRLKCWSELDLANSRFDEVFQRSCTQADAHSRCVAFRAVSFEADIFRRYESFMIPLLQETVDVMSNEDLETVLSSVLSLPFTEALESLIDAIGTRLLRMIDQCRRSALIRLLQCHAAFGIQDDALVSVCVATLTDQCGRDFRLDTAQVLALLQAAVDLDFFLPPKLVTSCFTWLEHHVENMTITQLGHAVRLAVDVEVGYTAAVHTLTLRALEQRDAIRSNASFREAVEMLCDEFSAEIPWHLRAPVLRRRYQSERLLEYLDKRRLAVDSTVA</sequence>
<accession>A0A120KVR5</accession>
<keyword id="KW-0496">Mitochondrion</keyword>
<keyword id="KW-0809">Transit peptide</keyword>
<proteinExistence type="evidence at protein level"/>
<name>MPSS2_TRYBB</name>
<evidence type="ECO:0000255" key="1"/>
<evidence type="ECO:0000256" key="2">
    <source>
        <dbReference type="SAM" id="MobiDB-lite"/>
    </source>
</evidence>
<evidence type="ECO:0000269" key="3">
    <source>
    </source>
</evidence>
<evidence type="ECO:0000303" key="4">
    <source>
    </source>
</evidence>
<evidence type="ECO:0000312" key="5">
    <source>
        <dbReference type="EMBL" id="AME15291.1"/>
    </source>
</evidence>
<comment type="function">
    <text evidence="3">As part of the mitochondrial 3' processome (MPsome), involved in the maturation of guided RNA (gRNA) precursors.</text>
</comment>
<comment type="subunit">
    <text evidence="3">Component of the mitochondrial 3' processome (MPsome) complex composed at least of terminal uridylyltransferase KRET1/TUT1, 3'-5' exonuclease DSS1, MPSS1, MPSS2 and MPSS3 (PubMed:26833087). Within the complex, interacts with DSS1 (PubMed:26833087).</text>
</comment>
<comment type="subcellular location">
    <subcellularLocation>
        <location evidence="3">Mitochondrion</location>
    </subcellularLocation>
</comment>
<comment type="developmental stage">
    <text evidence="3">Expressed at the procyclic stage (at protein level).</text>
</comment>
<comment type="disruption phenotype">
    <text evidence="3">RNAi-mediated knockdown at the procyclic stage causes moderate growth defect and reduces production of guided RNAs (gRNA) due to a block in the processing of gRNA precursors.</text>
</comment>
<dbReference type="EMBL" id="KT282121">
    <property type="protein sequence ID" value="AME15291.1"/>
    <property type="molecule type" value="Genomic_DNA"/>
</dbReference>
<dbReference type="GO" id="GO:0005739">
    <property type="term" value="C:mitochondrion"/>
    <property type="evidence" value="ECO:0000314"/>
    <property type="project" value="UniProtKB"/>
</dbReference>
<dbReference type="GO" id="GO:0032991">
    <property type="term" value="C:protein-containing complex"/>
    <property type="evidence" value="ECO:0000314"/>
    <property type="project" value="UniProtKB"/>
</dbReference>
<dbReference type="GO" id="GO:0080156">
    <property type="term" value="P:mitochondrial mRNA modification"/>
    <property type="evidence" value="ECO:0000315"/>
    <property type="project" value="UniProtKB"/>
</dbReference>
<dbReference type="CDD" id="cd23515">
    <property type="entry name" value="MPSS2"/>
    <property type="match status" value="1"/>
</dbReference>
<feature type="transit peptide" description="Mitochondrion" evidence="1">
    <location>
        <begin position="1"/>
        <end position="27"/>
    </location>
</feature>
<feature type="chain" id="PRO_0000450683" description="Mitochondrial 3' processome subunit 2" evidence="1">
    <location>
        <begin position="28"/>
        <end position="1642"/>
    </location>
</feature>
<feature type="region of interest" description="Disordered" evidence="2">
    <location>
        <begin position="43"/>
        <end position="69"/>
    </location>
</feature>
<feature type="region of interest" description="Disordered" evidence="2">
    <location>
        <begin position="745"/>
        <end position="772"/>
    </location>
</feature>
<feature type="compositionally biased region" description="Polar residues" evidence="2">
    <location>
        <begin position="49"/>
        <end position="65"/>
    </location>
</feature>
<reference evidence="5" key="1">
    <citation type="journal article" date="2016" name="Mol. Cell">
        <title>Antisense Transcripts Delimit Exonucleolytic Activity of the Mitochondrial 3' Processome to Generate Guide RNAs.</title>
        <authorList>
            <person name="Suematsu T."/>
            <person name="Zhang L."/>
            <person name="Aphasizheva I."/>
            <person name="Monti S."/>
            <person name="Huang L."/>
            <person name="Wang Q."/>
            <person name="Costello C.E."/>
            <person name="Aphasizhev R."/>
        </authorList>
    </citation>
    <scope>NUCLEOTIDE SEQUENCE [GENOMIC DNA]</scope>
    <scope>FUNCTION</scope>
    <scope>IDENTIFICATION IN THE MPSOME COMPLEX</scope>
    <scope>INTERACTION WITH DSS1</scope>
    <scope>SUBCELLULAR LOCATION</scope>
    <scope>DEVELOPMENTAL STAGE</scope>
    <scope>IDENTIFICATION BY MASS SPECTROMETRY</scope>
    <scope>DISRUPTION PHENOTYPE</scope>
</reference>
<gene>
    <name evidence="4" type="primary">MPSS2</name>
</gene>
<protein>
    <recommendedName>
        <fullName evidence="4">Mitochondrial 3' processome subunit 2</fullName>
    </recommendedName>
</protein>